<accession>Q9V0N0</accession>
<accession>G8ZGW0</accession>
<proteinExistence type="inferred from homology"/>
<feature type="chain" id="PRO_0000157325" description="2-dehydropantoate 2-reductase">
    <location>
        <begin position="1"/>
        <end position="300"/>
    </location>
</feature>
<feature type="active site" description="Proton donor" evidence="1">
    <location>
        <position position="179"/>
    </location>
</feature>
<feature type="binding site" evidence="2">
    <location>
        <begin position="7"/>
        <end position="12"/>
    </location>
    <ligand>
        <name>NADP(+)</name>
        <dbReference type="ChEBI" id="CHEBI:58349"/>
    </ligand>
</feature>
<feature type="binding site" evidence="2">
    <location>
        <position position="74"/>
    </location>
    <ligand>
        <name>NADP(+)</name>
        <dbReference type="ChEBI" id="CHEBI:58349"/>
    </ligand>
</feature>
<feature type="binding site" evidence="2">
    <location>
        <position position="99"/>
    </location>
    <ligand>
        <name>NADP(+)</name>
        <dbReference type="ChEBI" id="CHEBI:58349"/>
    </ligand>
</feature>
<feature type="binding site" evidence="2">
    <location>
        <position position="123"/>
    </location>
    <ligand>
        <name>NADP(+)</name>
        <dbReference type="ChEBI" id="CHEBI:58349"/>
    </ligand>
</feature>
<feature type="binding site" evidence="2">
    <location>
        <position position="179"/>
    </location>
    <ligand>
        <name>substrate</name>
    </ligand>
</feature>
<feature type="binding site" evidence="2">
    <location>
        <position position="183"/>
    </location>
    <ligand>
        <name>substrate</name>
    </ligand>
</feature>
<feature type="binding site" evidence="2">
    <location>
        <position position="187"/>
    </location>
    <ligand>
        <name>substrate</name>
    </ligand>
</feature>
<feature type="binding site" evidence="2">
    <location>
        <position position="197"/>
    </location>
    <ligand>
        <name>substrate</name>
    </ligand>
</feature>
<feature type="binding site" evidence="2">
    <location>
        <begin position="246"/>
        <end position="249"/>
    </location>
    <ligand>
        <name>substrate</name>
    </ligand>
</feature>
<feature type="binding site" evidence="2">
    <location>
        <position position="261"/>
    </location>
    <ligand>
        <name>NADP(+)</name>
        <dbReference type="ChEBI" id="CHEBI:58349"/>
    </ligand>
</feature>
<dbReference type="EC" id="1.1.1.169" evidence="2"/>
<dbReference type="EMBL" id="AJ248285">
    <property type="protein sequence ID" value="CAB49673.1"/>
    <property type="molecule type" value="Genomic_DNA"/>
</dbReference>
<dbReference type="EMBL" id="HE613800">
    <property type="protein sequence ID" value="CCE70155.1"/>
    <property type="molecule type" value="Genomic_DNA"/>
</dbReference>
<dbReference type="PIR" id="H75119">
    <property type="entry name" value="H75119"/>
</dbReference>
<dbReference type="RefSeq" id="WP_010867881.1">
    <property type="nucleotide sequence ID" value="NC_000868.1"/>
</dbReference>
<dbReference type="SMR" id="Q9V0N0"/>
<dbReference type="STRING" id="272844.PAB0512"/>
<dbReference type="KEGG" id="pab:PAB0512"/>
<dbReference type="PATRIC" id="fig|272844.11.peg.799"/>
<dbReference type="eggNOG" id="arCOG04139">
    <property type="taxonomic scope" value="Archaea"/>
</dbReference>
<dbReference type="HOGENOM" id="CLU_031468_6_1_2"/>
<dbReference type="OrthoDB" id="201845at2157"/>
<dbReference type="PhylomeDB" id="Q9V0N0"/>
<dbReference type="UniPathway" id="UPA00241"/>
<dbReference type="Proteomes" id="UP000000810">
    <property type="component" value="Chromosome"/>
</dbReference>
<dbReference type="Proteomes" id="UP000009139">
    <property type="component" value="Chromosome"/>
</dbReference>
<dbReference type="GO" id="GO:0005737">
    <property type="term" value="C:cytoplasm"/>
    <property type="evidence" value="ECO:0007669"/>
    <property type="project" value="UniProtKB-SubCell"/>
</dbReference>
<dbReference type="GO" id="GO:0008677">
    <property type="term" value="F:2-dehydropantoate 2-reductase activity"/>
    <property type="evidence" value="ECO:0007669"/>
    <property type="project" value="UniProtKB-EC"/>
</dbReference>
<dbReference type="GO" id="GO:0050661">
    <property type="term" value="F:NADP binding"/>
    <property type="evidence" value="ECO:0007669"/>
    <property type="project" value="TreeGrafter"/>
</dbReference>
<dbReference type="GO" id="GO:0015937">
    <property type="term" value="P:coenzyme A biosynthetic process"/>
    <property type="evidence" value="ECO:0007669"/>
    <property type="project" value="UniProtKB-UniPathway"/>
</dbReference>
<dbReference type="GO" id="GO:0015940">
    <property type="term" value="P:pantothenate biosynthetic process"/>
    <property type="evidence" value="ECO:0007669"/>
    <property type="project" value="InterPro"/>
</dbReference>
<dbReference type="Gene3D" id="1.10.1040.10">
    <property type="entry name" value="N-(1-d-carboxylethyl)-l-norvaline Dehydrogenase, domain 2"/>
    <property type="match status" value="1"/>
</dbReference>
<dbReference type="Gene3D" id="3.40.50.720">
    <property type="entry name" value="NAD(P)-binding Rossmann-like Domain"/>
    <property type="match status" value="1"/>
</dbReference>
<dbReference type="InterPro" id="IPR008927">
    <property type="entry name" value="6-PGluconate_DH-like_C_sf"/>
</dbReference>
<dbReference type="InterPro" id="IPR013328">
    <property type="entry name" value="6PGD_dom2"/>
</dbReference>
<dbReference type="InterPro" id="IPR003710">
    <property type="entry name" value="ApbA"/>
</dbReference>
<dbReference type="InterPro" id="IPR050838">
    <property type="entry name" value="Ketopantoate_reductase"/>
</dbReference>
<dbReference type="InterPro" id="IPR013752">
    <property type="entry name" value="KPA_reductase"/>
</dbReference>
<dbReference type="InterPro" id="IPR013332">
    <property type="entry name" value="KPR_N"/>
</dbReference>
<dbReference type="InterPro" id="IPR036291">
    <property type="entry name" value="NAD(P)-bd_dom_sf"/>
</dbReference>
<dbReference type="NCBIfam" id="TIGR00745">
    <property type="entry name" value="apbA_panE"/>
    <property type="match status" value="1"/>
</dbReference>
<dbReference type="NCBIfam" id="NF005092">
    <property type="entry name" value="PRK06522.2-3"/>
    <property type="match status" value="1"/>
</dbReference>
<dbReference type="PANTHER" id="PTHR43765:SF2">
    <property type="entry name" value="2-DEHYDROPANTOATE 2-REDUCTASE"/>
    <property type="match status" value="1"/>
</dbReference>
<dbReference type="PANTHER" id="PTHR43765">
    <property type="entry name" value="2-DEHYDROPANTOATE 2-REDUCTASE-RELATED"/>
    <property type="match status" value="1"/>
</dbReference>
<dbReference type="Pfam" id="PF02558">
    <property type="entry name" value="ApbA"/>
    <property type="match status" value="1"/>
</dbReference>
<dbReference type="Pfam" id="PF08546">
    <property type="entry name" value="ApbA_C"/>
    <property type="match status" value="1"/>
</dbReference>
<dbReference type="SUPFAM" id="SSF48179">
    <property type="entry name" value="6-phosphogluconate dehydrogenase C-terminal domain-like"/>
    <property type="match status" value="1"/>
</dbReference>
<dbReference type="SUPFAM" id="SSF51735">
    <property type="entry name" value="NAD(P)-binding Rossmann-fold domains"/>
    <property type="match status" value="1"/>
</dbReference>
<protein>
    <recommendedName>
        <fullName evidence="2">2-dehydropantoate 2-reductase</fullName>
        <ecNumber evidence="2">1.1.1.169</ecNumber>
    </recommendedName>
    <alternativeName>
        <fullName evidence="2">Ketopantoate reductase</fullName>
        <shortName evidence="2">KPR</shortName>
    </alternativeName>
</protein>
<sequence length="300" mass="32773">MKIYILGAGAIGSLFGGLLANAGEDVLLIGRDPHVSAINEKGLKIVGIKDLNVKVEATTRVPEEKPDLIVLATKSYSTIEALKSARHIVKGSWVLSIQNGIGNEDKIIEFGGKAIGGITTNGAMVEAPGVIKWTGKGVTIIGLYPQGKEKFIEKVADVFNSADIETHVSENIISWIWAKAIVNSAINPIGTLLEVKNKVIRENDFLLSMAMEVVKEGCRVALQNGIEFDVPPMDLFFQTLEQTRENYNSMLQDIWRGKKTEVDYINGKIVEYAKAVNLEAPMNLLLWGLIKGKEALEGKK</sequence>
<organism>
    <name type="scientific">Pyrococcus abyssi (strain GE5 / Orsay)</name>
    <dbReference type="NCBI Taxonomy" id="272844"/>
    <lineage>
        <taxon>Archaea</taxon>
        <taxon>Methanobacteriati</taxon>
        <taxon>Methanobacteriota</taxon>
        <taxon>Thermococci</taxon>
        <taxon>Thermococcales</taxon>
        <taxon>Thermococcaceae</taxon>
        <taxon>Pyrococcus</taxon>
    </lineage>
</organism>
<name>PANE_PYRAB</name>
<comment type="function">
    <text evidence="2">Catalyzes the NAD(P)H-dependent reduction of ketopantoate into pantoic acid.</text>
</comment>
<comment type="catalytic activity">
    <reaction evidence="2">
        <text>(R)-pantoate + NAD(+) = 2-dehydropantoate + NADH + H(+)</text>
        <dbReference type="Rhea" id="RHEA:61292"/>
        <dbReference type="ChEBI" id="CHEBI:11561"/>
        <dbReference type="ChEBI" id="CHEBI:15378"/>
        <dbReference type="ChEBI" id="CHEBI:15980"/>
        <dbReference type="ChEBI" id="CHEBI:57540"/>
        <dbReference type="ChEBI" id="CHEBI:57945"/>
    </reaction>
    <physiologicalReaction direction="right-to-left" evidence="2">
        <dbReference type="Rhea" id="RHEA:61294"/>
    </physiologicalReaction>
</comment>
<comment type="catalytic activity">
    <reaction evidence="2">
        <text>(R)-pantoate + NADP(+) = 2-dehydropantoate + NADPH + H(+)</text>
        <dbReference type="Rhea" id="RHEA:16233"/>
        <dbReference type="ChEBI" id="CHEBI:11561"/>
        <dbReference type="ChEBI" id="CHEBI:15378"/>
        <dbReference type="ChEBI" id="CHEBI:15980"/>
        <dbReference type="ChEBI" id="CHEBI:57783"/>
        <dbReference type="ChEBI" id="CHEBI:58349"/>
        <dbReference type="EC" id="1.1.1.169"/>
    </reaction>
    <physiologicalReaction direction="right-to-left" evidence="2">
        <dbReference type="Rhea" id="RHEA:16235"/>
    </physiologicalReaction>
</comment>
<comment type="pathway">
    <text evidence="2">Cofactor biosynthesis; coenzyme A biosynthesis.</text>
</comment>
<comment type="subcellular location">
    <subcellularLocation>
        <location evidence="2">Cytoplasm</location>
    </subcellularLocation>
</comment>
<comment type="similarity">
    <text evidence="3">Belongs to the ketopantoate reductase family.</text>
</comment>
<reference key="1">
    <citation type="journal article" date="2003" name="Mol. Microbiol.">
        <title>An integrated analysis of the genome of the hyperthermophilic archaeon Pyrococcus abyssi.</title>
        <authorList>
            <person name="Cohen G.N."/>
            <person name="Barbe V."/>
            <person name="Flament D."/>
            <person name="Galperin M."/>
            <person name="Heilig R."/>
            <person name="Lecompte O."/>
            <person name="Poch O."/>
            <person name="Prieur D."/>
            <person name="Querellou J."/>
            <person name="Ripp R."/>
            <person name="Thierry J.-C."/>
            <person name="Van der Oost J."/>
            <person name="Weissenbach J."/>
            <person name="Zivanovic Y."/>
            <person name="Forterre P."/>
        </authorList>
    </citation>
    <scope>NUCLEOTIDE SEQUENCE [LARGE SCALE GENOMIC DNA]</scope>
    <source>
        <strain>GE5 / Orsay</strain>
    </source>
</reference>
<reference key="2">
    <citation type="journal article" date="2012" name="Curr. Microbiol.">
        <title>Re-annotation of two hyperthermophilic archaea Pyrococcus abyssi GE5 and Pyrococcus furiosus DSM 3638.</title>
        <authorList>
            <person name="Gao J."/>
            <person name="Wang J."/>
        </authorList>
    </citation>
    <scope>GENOME REANNOTATION</scope>
    <source>
        <strain>GE5 / Orsay</strain>
    </source>
</reference>
<keyword id="KW-0173">Coenzyme A biosynthesis</keyword>
<keyword id="KW-0963">Cytoplasm</keyword>
<keyword id="KW-0520">NAD</keyword>
<keyword id="KW-0521">NADP</keyword>
<keyword id="KW-0560">Oxidoreductase</keyword>
<gene>
    <name type="primary">apbA</name>
    <name type="ordered locus">PYRAB07590</name>
    <name type="ORF">PAB0512</name>
</gene>
<evidence type="ECO:0000250" key="1">
    <source>
        <dbReference type="UniProtKB" id="P0A9J4"/>
    </source>
</evidence>
<evidence type="ECO:0000250" key="2">
    <source>
        <dbReference type="UniProtKB" id="Q5JGC2"/>
    </source>
</evidence>
<evidence type="ECO:0000305" key="3"/>